<sequence length="20" mass="2519">ADDINPKEECFFEDDYYEFE</sequence>
<proteinExistence type="evidence at protein level"/>
<reference key="1">
    <citation type="journal article" date="2008" name="FEBS J.">
        <title>Two L-amino acid oxidase isoenzymes from Russell's viper (Daboia russelli russelli) venom with different mechanisms of inhibition by substrate analogs.</title>
        <authorList>
            <person name="Mandal S."/>
            <person name="Bhattacharyya D."/>
        </authorList>
    </citation>
    <scope>PROTEIN SEQUENCE</scope>
    <scope>CATALYTIC ACTIVITY</scope>
    <scope>GLYCOSYLATION</scope>
    <scope>COFACTOR</scope>
    <scope>BIOPHYSICOCHEMICAL PROPERTIES</scope>
    <scope>SUBUNIT</scope>
    <scope>INHIBITION BY SUBSTRATE ANALOGS</scope>
    <scope>SUBCELLULAR LOCATION</scope>
    <scope>SUBSTRATE SPECIFICITY</scope>
    <source>
        <tissue>Venom</tissue>
    </source>
</reference>
<reference key="2">
    <citation type="journal article" date="2010" name="Biomed. Res.">
        <title>Molecular diversity in venom proteins of the Russell's viper (Daboia russellii russellii) and the Indian cobra (Naja naja) in Sri Lanka.</title>
        <authorList>
            <person name="Suzuki M."/>
            <person name="Itoh T."/>
            <person name="Bandaranayake B.M.A.I.K."/>
            <person name="Ranasinghe J.G."/>
            <person name="Athauda S.B."/>
            <person name="Moriyama A."/>
        </authorList>
    </citation>
    <scope>PROTEIN SEQUENCE OF 1-19</scope>
    <scope>SUBCELLULAR LOCATION</scope>
    <source>
        <tissue>Venom</tissue>
    </source>
</reference>
<name>OXLA1_DABRR</name>
<comment type="function">
    <text evidence="1 4">Catalyzes an oxidative deamination of predominantly hydrophobic and aromatic L-amino acids, thus producing hydrogen peroxide that may contribute to the diverse toxic effects of this enzyme (PubMed:18384385). Is active on L-Met, L-Ile, L-Leu, L-Phe, L-Trp, and L-Tyr (PubMed:18384385). Exhibits diverse biological activities, such as hemorrhage, hemolysis, edema, apoptosis of vascular endothelial cells or tumor cell lines, antibacterial and antiparasitic activities, as well as regulation of platelet aggregation. Its effect on platelets is controversial, since it either induces aggregation or inhibits agonist-induced aggregation. These different effects are probably due to different experimental conditions.</text>
</comment>
<comment type="catalytic activity">
    <reaction evidence="4">
        <text>an L-alpha-amino acid + O2 + H2O = a 2-oxocarboxylate + H2O2 + NH4(+)</text>
        <dbReference type="Rhea" id="RHEA:13781"/>
        <dbReference type="ChEBI" id="CHEBI:15377"/>
        <dbReference type="ChEBI" id="CHEBI:15379"/>
        <dbReference type="ChEBI" id="CHEBI:16240"/>
        <dbReference type="ChEBI" id="CHEBI:28938"/>
        <dbReference type="ChEBI" id="CHEBI:35179"/>
        <dbReference type="ChEBI" id="CHEBI:59869"/>
        <dbReference type="EC" id="1.4.3.2"/>
    </reaction>
</comment>
<comment type="catalytic activity">
    <reaction evidence="4">
        <text>L-leucine + O2 + H2O = 4-methyl-2-oxopentanoate + H2O2 + NH4(+)</text>
        <dbReference type="Rhea" id="RHEA:60996"/>
        <dbReference type="ChEBI" id="CHEBI:15377"/>
        <dbReference type="ChEBI" id="CHEBI:15379"/>
        <dbReference type="ChEBI" id="CHEBI:16240"/>
        <dbReference type="ChEBI" id="CHEBI:17865"/>
        <dbReference type="ChEBI" id="CHEBI:28938"/>
        <dbReference type="ChEBI" id="CHEBI:57427"/>
    </reaction>
</comment>
<comment type="catalytic activity">
    <reaction evidence="4">
        <text>L-phenylalanine + O2 + H2O = 3-phenylpyruvate + H2O2 + NH4(+)</text>
        <dbReference type="Rhea" id="RHEA:61240"/>
        <dbReference type="ChEBI" id="CHEBI:15377"/>
        <dbReference type="ChEBI" id="CHEBI:15379"/>
        <dbReference type="ChEBI" id="CHEBI:16240"/>
        <dbReference type="ChEBI" id="CHEBI:18005"/>
        <dbReference type="ChEBI" id="CHEBI:28938"/>
        <dbReference type="ChEBI" id="CHEBI:58095"/>
    </reaction>
</comment>
<comment type="catalytic activity">
    <reaction evidence="4">
        <text>L-tryptophan + O2 + H2O = indole-3-pyruvate + H2O2 + NH4(+)</text>
        <dbReference type="Rhea" id="RHEA:61244"/>
        <dbReference type="ChEBI" id="CHEBI:15377"/>
        <dbReference type="ChEBI" id="CHEBI:15379"/>
        <dbReference type="ChEBI" id="CHEBI:16240"/>
        <dbReference type="ChEBI" id="CHEBI:17640"/>
        <dbReference type="ChEBI" id="CHEBI:28938"/>
        <dbReference type="ChEBI" id="CHEBI:57912"/>
    </reaction>
</comment>
<comment type="catalytic activity">
    <reaction evidence="4">
        <text>L-methionine + O2 + H2O = 4-methylsulfanyl-2-oxobutanoate + H2O2 + NH4(+)</text>
        <dbReference type="Rhea" id="RHEA:61236"/>
        <dbReference type="ChEBI" id="CHEBI:15377"/>
        <dbReference type="ChEBI" id="CHEBI:15379"/>
        <dbReference type="ChEBI" id="CHEBI:16240"/>
        <dbReference type="ChEBI" id="CHEBI:16723"/>
        <dbReference type="ChEBI" id="CHEBI:28938"/>
        <dbReference type="ChEBI" id="CHEBI:57844"/>
    </reaction>
</comment>
<comment type="catalytic activity">
    <reaction evidence="4">
        <text>L-isoleucine + O2 + H2O = (S)-3-methyl-2-oxopentanoate + H2O2 + NH4(+)</text>
        <dbReference type="Rhea" id="RHEA:61232"/>
        <dbReference type="ChEBI" id="CHEBI:15377"/>
        <dbReference type="ChEBI" id="CHEBI:15379"/>
        <dbReference type="ChEBI" id="CHEBI:16240"/>
        <dbReference type="ChEBI" id="CHEBI:28938"/>
        <dbReference type="ChEBI" id="CHEBI:35146"/>
        <dbReference type="ChEBI" id="CHEBI:58045"/>
    </reaction>
</comment>
<comment type="catalytic activity">
    <reaction evidence="4">
        <text>L-tyrosine + O2 + H2O = 3-(4-hydroxyphenyl)pyruvate + H2O2 + NH4(+)</text>
        <dbReference type="Rhea" id="RHEA:61248"/>
        <dbReference type="ChEBI" id="CHEBI:15377"/>
        <dbReference type="ChEBI" id="CHEBI:15379"/>
        <dbReference type="ChEBI" id="CHEBI:16240"/>
        <dbReference type="ChEBI" id="CHEBI:28938"/>
        <dbReference type="ChEBI" id="CHEBI:36242"/>
        <dbReference type="ChEBI" id="CHEBI:58315"/>
    </reaction>
</comment>
<comment type="cofactor">
    <cofactor evidence="4">
        <name>FAD</name>
        <dbReference type="ChEBI" id="CHEBI:57692"/>
    </cofactor>
</comment>
<comment type="biophysicochemical properties">
    <kinetics>
        <KM evidence="4">0.297 mM for L-Met</KM>
        <KM evidence="4">1.44 mM for L-Ile</KM>
        <KM evidence="4">0.75 mM for L-Leu</KM>
        <KM evidence="4">0.066 mM for L-Phe</KM>
        <KM evidence="4">0.21 mM for L-Trp</KM>
        <KM evidence="4">0.052 mM for L-Tyr</KM>
        <Vmax evidence="4">8.96 umol/min/mg enzyme toward L-Phe</Vmax>
    </kinetics>
</comment>
<comment type="subunit">
    <text evidence="4 8">Monomer (Probable). This is in contrast with most of its orthologs, that are non-covalently linked homodimers.</text>
</comment>
<comment type="subcellular location">
    <subcellularLocation>
        <location evidence="4 5">Secreted</location>
    </subcellularLocation>
</comment>
<comment type="tissue specificity">
    <text evidence="9 10">Expressed by the venom gland.</text>
</comment>
<comment type="PTM">
    <text evidence="9">N-glycosylated.</text>
</comment>
<comment type="similarity">
    <text evidence="3">Belongs to the flavin monoamine oxidase family. FIG1 subfamily.</text>
</comment>
<organism>
    <name type="scientific">Daboia russelii</name>
    <name type="common">Russel's viper</name>
    <name type="synonym">Vipera russelii</name>
    <dbReference type="NCBI Taxonomy" id="8707"/>
    <lineage>
        <taxon>Eukaryota</taxon>
        <taxon>Metazoa</taxon>
        <taxon>Chordata</taxon>
        <taxon>Craniata</taxon>
        <taxon>Vertebrata</taxon>
        <taxon>Euteleostomi</taxon>
        <taxon>Lepidosauria</taxon>
        <taxon>Squamata</taxon>
        <taxon>Bifurcata</taxon>
        <taxon>Unidentata</taxon>
        <taxon>Episquamata</taxon>
        <taxon>Toxicofera</taxon>
        <taxon>Serpentes</taxon>
        <taxon>Colubroidea</taxon>
        <taxon>Viperidae</taxon>
        <taxon>Viperinae</taxon>
        <taxon>Daboia</taxon>
    </lineage>
</organism>
<dbReference type="EC" id="1.4.3.2" evidence="4"/>
<dbReference type="SABIO-RK" id="P86535"/>
<dbReference type="GO" id="GO:0005576">
    <property type="term" value="C:extracellular region"/>
    <property type="evidence" value="ECO:0007669"/>
    <property type="project" value="UniProtKB-SubCell"/>
</dbReference>
<dbReference type="GO" id="GO:0106329">
    <property type="term" value="F:L-phenylalaine oxidase activity"/>
    <property type="evidence" value="ECO:0007669"/>
    <property type="project" value="RHEA"/>
</dbReference>
<dbReference type="GO" id="GO:0090729">
    <property type="term" value="F:toxin activity"/>
    <property type="evidence" value="ECO:0007669"/>
    <property type="project" value="UniProtKB-KW"/>
</dbReference>
<dbReference type="GO" id="GO:0006915">
    <property type="term" value="P:apoptotic process"/>
    <property type="evidence" value="ECO:0007669"/>
    <property type="project" value="UniProtKB-KW"/>
</dbReference>
<dbReference type="GO" id="GO:0042742">
    <property type="term" value="P:defense response to bacterium"/>
    <property type="evidence" value="ECO:0007669"/>
    <property type="project" value="UniProtKB-KW"/>
</dbReference>
<dbReference type="GO" id="GO:0031640">
    <property type="term" value="P:killing of cells of another organism"/>
    <property type="evidence" value="ECO:0007669"/>
    <property type="project" value="UniProtKB-KW"/>
</dbReference>
<keyword id="KW-0044">Antibiotic</keyword>
<keyword id="KW-0929">Antimicrobial</keyword>
<keyword id="KW-0053">Apoptosis</keyword>
<keyword id="KW-0204">Cytolysis</keyword>
<keyword id="KW-0903">Direct protein sequencing</keyword>
<keyword id="KW-1015">Disulfide bond</keyword>
<keyword id="KW-0274">FAD</keyword>
<keyword id="KW-0285">Flavoprotein</keyword>
<keyword id="KW-0325">Glycoprotein</keyword>
<keyword id="KW-0354">Hemolysis</keyword>
<keyword id="KW-1199">Hemostasis impairing toxin</keyword>
<keyword id="KW-0560">Oxidoreductase</keyword>
<keyword id="KW-0964">Secreted</keyword>
<keyword id="KW-0800">Toxin</keyword>
<evidence type="ECO:0000250" key="1"/>
<evidence type="ECO:0000250" key="2">
    <source>
        <dbReference type="UniProtKB" id="Q90W54"/>
    </source>
</evidence>
<evidence type="ECO:0000255" key="3"/>
<evidence type="ECO:0000269" key="4">
    <source>
    </source>
</evidence>
<evidence type="ECO:0000269" key="5">
    <source>
    </source>
</evidence>
<evidence type="ECO:0000303" key="6">
    <source>
    </source>
</evidence>
<evidence type="ECO:0000303" key="7">
    <source>
    </source>
</evidence>
<evidence type="ECO:0000305" key="8"/>
<evidence type="ECO:0000305" key="9">
    <source>
    </source>
</evidence>
<evidence type="ECO:0000305" key="10">
    <source>
    </source>
</evidence>
<protein>
    <recommendedName>
        <fullName evidence="6">L-amino-acid oxidase L1</fullName>
        <shortName evidence="6">LAAO-L1</shortName>
        <shortName evidence="7">LAO</shortName>
        <ecNumber evidence="4">1.4.3.2</ecNumber>
    </recommendedName>
</protein>
<accession>P86535</accession>
<feature type="chain" id="PRO_0000394725" description="L-amino-acid oxidase L1">
    <location>
        <begin position="1"/>
        <end position="20" status="greater than"/>
    </location>
</feature>
<feature type="disulfide bond" evidence="2">
    <location>
        <begin position="10"/>
        <end status="unknown"/>
    </location>
</feature>
<feature type="sequence conflict" description="In Ref. 2; AA sequence." evidence="8" ref="2">
    <original>I</original>
    <variation>K</variation>
    <location>
        <position position="4"/>
    </location>
</feature>
<feature type="sequence conflict" description="In Ref. 2; AA sequence." evidence="8" ref="2">
    <original>K</original>
    <variation>L</variation>
    <location>
        <position position="7"/>
    </location>
</feature>
<feature type="sequence conflict" description="In Ref. 2; AA sequence." evidence="8" ref="2">
    <original>F</original>
    <variation>R</variation>
    <location>
        <position position="12"/>
    </location>
</feature>
<feature type="sequence conflict" description="In Ref. 2; AA sequence." evidence="8" ref="2">
    <original>Y</original>
    <variation>E</variation>
    <location>
        <position position="17"/>
    </location>
</feature>
<feature type="non-terminal residue" evidence="6">
    <location>
        <position position="20"/>
    </location>
</feature>